<accession>A0R016</accession>
<accession>I7GD35</accession>
<name>MURG_MYCS2</name>
<gene>
    <name evidence="1" type="primary">murG</name>
    <name type="ordered locus">MSMEG_4227</name>
    <name type="ordered locus">MSMEI_4127</name>
</gene>
<organism>
    <name type="scientific">Mycolicibacterium smegmatis (strain ATCC 700084 / mc(2)155)</name>
    <name type="common">Mycobacterium smegmatis</name>
    <dbReference type="NCBI Taxonomy" id="246196"/>
    <lineage>
        <taxon>Bacteria</taxon>
        <taxon>Bacillati</taxon>
        <taxon>Actinomycetota</taxon>
        <taxon>Actinomycetes</taxon>
        <taxon>Mycobacteriales</taxon>
        <taxon>Mycobacteriaceae</taxon>
        <taxon>Mycolicibacterium</taxon>
    </lineage>
</organism>
<dbReference type="EC" id="2.4.1.227" evidence="1"/>
<dbReference type="EMBL" id="CP000480">
    <property type="protein sequence ID" value="ABK70265.1"/>
    <property type="molecule type" value="Genomic_DNA"/>
</dbReference>
<dbReference type="EMBL" id="CP001663">
    <property type="protein sequence ID" value="AFP40584.1"/>
    <property type="molecule type" value="Genomic_DNA"/>
</dbReference>
<dbReference type="RefSeq" id="WP_011729656.1">
    <property type="nucleotide sequence ID" value="NZ_SIJM01000003.1"/>
</dbReference>
<dbReference type="RefSeq" id="YP_888504.1">
    <property type="nucleotide sequence ID" value="NC_008596.1"/>
</dbReference>
<dbReference type="SMR" id="A0R016"/>
<dbReference type="STRING" id="246196.MSMEG_4227"/>
<dbReference type="CAZy" id="GT28">
    <property type="family name" value="Glycosyltransferase Family 28"/>
</dbReference>
<dbReference type="PaxDb" id="246196-MSMEI_4127"/>
<dbReference type="GeneID" id="93458945"/>
<dbReference type="KEGG" id="msg:MSMEI_4127"/>
<dbReference type="KEGG" id="msm:MSMEG_4227"/>
<dbReference type="PATRIC" id="fig|246196.19.peg.4147"/>
<dbReference type="eggNOG" id="COG0707">
    <property type="taxonomic scope" value="Bacteria"/>
</dbReference>
<dbReference type="OrthoDB" id="9808936at2"/>
<dbReference type="UniPathway" id="UPA00219"/>
<dbReference type="Proteomes" id="UP000000757">
    <property type="component" value="Chromosome"/>
</dbReference>
<dbReference type="Proteomes" id="UP000006158">
    <property type="component" value="Chromosome"/>
</dbReference>
<dbReference type="GO" id="GO:0005886">
    <property type="term" value="C:plasma membrane"/>
    <property type="evidence" value="ECO:0007669"/>
    <property type="project" value="UniProtKB-SubCell"/>
</dbReference>
<dbReference type="GO" id="GO:0051991">
    <property type="term" value="F:UDP-N-acetyl-D-glucosamine:N-acetylmuramoyl-L-alanyl-D-glutamyl-meso-2,6-diaminopimelyl-D-alanyl-D-alanine-diphosphoundecaprenol 4-beta-N-acetylglucosaminlytransferase activity"/>
    <property type="evidence" value="ECO:0007669"/>
    <property type="project" value="RHEA"/>
</dbReference>
<dbReference type="GO" id="GO:0050511">
    <property type="term" value="F:undecaprenyldiphospho-muramoylpentapeptide beta-N-acetylglucosaminyltransferase activity"/>
    <property type="evidence" value="ECO:0007669"/>
    <property type="project" value="UniProtKB-UniRule"/>
</dbReference>
<dbReference type="GO" id="GO:0005975">
    <property type="term" value="P:carbohydrate metabolic process"/>
    <property type="evidence" value="ECO:0007669"/>
    <property type="project" value="InterPro"/>
</dbReference>
<dbReference type="GO" id="GO:0051301">
    <property type="term" value="P:cell division"/>
    <property type="evidence" value="ECO:0007669"/>
    <property type="project" value="UniProtKB-KW"/>
</dbReference>
<dbReference type="GO" id="GO:0071555">
    <property type="term" value="P:cell wall organization"/>
    <property type="evidence" value="ECO:0007669"/>
    <property type="project" value="UniProtKB-KW"/>
</dbReference>
<dbReference type="GO" id="GO:0030259">
    <property type="term" value="P:lipid glycosylation"/>
    <property type="evidence" value="ECO:0007669"/>
    <property type="project" value="UniProtKB-UniRule"/>
</dbReference>
<dbReference type="GO" id="GO:0009252">
    <property type="term" value="P:peptidoglycan biosynthetic process"/>
    <property type="evidence" value="ECO:0007669"/>
    <property type="project" value="UniProtKB-UniRule"/>
</dbReference>
<dbReference type="GO" id="GO:0008360">
    <property type="term" value="P:regulation of cell shape"/>
    <property type="evidence" value="ECO:0007669"/>
    <property type="project" value="UniProtKB-KW"/>
</dbReference>
<dbReference type="CDD" id="cd03785">
    <property type="entry name" value="GT28_MurG"/>
    <property type="match status" value="1"/>
</dbReference>
<dbReference type="Gene3D" id="3.40.50.2000">
    <property type="entry name" value="Glycogen Phosphorylase B"/>
    <property type="match status" value="2"/>
</dbReference>
<dbReference type="HAMAP" id="MF_00033">
    <property type="entry name" value="MurG"/>
    <property type="match status" value="1"/>
</dbReference>
<dbReference type="InterPro" id="IPR006009">
    <property type="entry name" value="GlcNAc_MurG"/>
</dbReference>
<dbReference type="InterPro" id="IPR007235">
    <property type="entry name" value="Glyco_trans_28_C"/>
</dbReference>
<dbReference type="InterPro" id="IPR004276">
    <property type="entry name" value="GlycoTrans_28_N"/>
</dbReference>
<dbReference type="NCBIfam" id="TIGR01133">
    <property type="entry name" value="murG"/>
    <property type="match status" value="1"/>
</dbReference>
<dbReference type="PANTHER" id="PTHR21015:SF22">
    <property type="entry name" value="GLYCOSYLTRANSFERASE"/>
    <property type="match status" value="1"/>
</dbReference>
<dbReference type="PANTHER" id="PTHR21015">
    <property type="entry name" value="UDP-N-ACETYLGLUCOSAMINE--N-ACETYLMURAMYL-(PENTAPEPTIDE) PYROPHOSPHORYL-UNDECAPRENOL N-ACETYLGLUCOSAMINE TRANSFERASE 1"/>
    <property type="match status" value="1"/>
</dbReference>
<dbReference type="Pfam" id="PF04101">
    <property type="entry name" value="Glyco_tran_28_C"/>
    <property type="match status" value="1"/>
</dbReference>
<dbReference type="Pfam" id="PF03033">
    <property type="entry name" value="Glyco_transf_28"/>
    <property type="match status" value="1"/>
</dbReference>
<dbReference type="SUPFAM" id="SSF53756">
    <property type="entry name" value="UDP-Glycosyltransferase/glycogen phosphorylase"/>
    <property type="match status" value="1"/>
</dbReference>
<proteinExistence type="inferred from homology"/>
<protein>
    <recommendedName>
        <fullName evidence="1">UDP-N-acetylglucosamine--N-acetylmuramyl-(pentapeptide) pyrophosphoryl-undecaprenol N-acetylglucosamine transferase</fullName>
        <ecNumber evidence="1">2.4.1.227</ecNumber>
    </recommendedName>
    <alternativeName>
        <fullName evidence="1">Undecaprenyl-PP-MurNAc-pentapeptide-UDPGlcNAc GlcNAc transferase</fullName>
    </alternativeName>
</protein>
<feature type="chain" id="PRO_0000315119" description="UDP-N-acetylglucosamine--N-acetylmuramyl-(pentapeptide) pyrophosphoryl-undecaprenol N-acetylglucosamine transferase">
    <location>
        <begin position="1"/>
        <end position="385"/>
    </location>
</feature>
<feature type="binding site" evidence="1">
    <location>
        <begin position="24"/>
        <end position="26"/>
    </location>
    <ligand>
        <name>UDP-N-acetyl-alpha-D-glucosamine</name>
        <dbReference type="ChEBI" id="CHEBI:57705"/>
    </ligand>
</feature>
<feature type="binding site" evidence="1">
    <location>
        <position position="143"/>
    </location>
    <ligand>
        <name>UDP-N-acetyl-alpha-D-glucosamine</name>
        <dbReference type="ChEBI" id="CHEBI:57705"/>
    </ligand>
</feature>
<feature type="binding site" evidence="1">
    <location>
        <position position="180"/>
    </location>
    <ligand>
        <name>UDP-N-acetyl-alpha-D-glucosamine</name>
        <dbReference type="ChEBI" id="CHEBI:57705"/>
    </ligand>
</feature>
<feature type="binding site" evidence="1">
    <location>
        <position position="214"/>
    </location>
    <ligand>
        <name>UDP-N-acetyl-alpha-D-glucosamine</name>
        <dbReference type="ChEBI" id="CHEBI:57705"/>
    </ligand>
</feature>
<feature type="binding site" evidence="1">
    <location>
        <position position="310"/>
    </location>
    <ligand>
        <name>UDP-N-acetyl-alpha-D-glucosamine</name>
        <dbReference type="ChEBI" id="CHEBI:57705"/>
    </ligand>
</feature>
<keyword id="KW-0131">Cell cycle</keyword>
<keyword id="KW-0132">Cell division</keyword>
<keyword id="KW-1003">Cell membrane</keyword>
<keyword id="KW-0133">Cell shape</keyword>
<keyword id="KW-0961">Cell wall biogenesis/degradation</keyword>
<keyword id="KW-0328">Glycosyltransferase</keyword>
<keyword id="KW-0472">Membrane</keyword>
<keyword id="KW-0573">Peptidoglycan synthesis</keyword>
<keyword id="KW-1185">Reference proteome</keyword>
<keyword id="KW-0808">Transferase</keyword>
<evidence type="ECO:0000255" key="1">
    <source>
        <dbReference type="HAMAP-Rule" id="MF_00033"/>
    </source>
</evidence>
<sequence>MNKGSRDNNHSDRGISVVLAGGGTAGHVEPAMAVADALRALDPDVRITALGTQRGLETRLVPQRGYDLELITPVPLPRKPSKDLLRLPMRVRTAIRQTRDVLTGVNADVVVGFGGYVALPAYLAARGGLTGRRKVPVVVHEANARAGLANRVGARSARRVLSAVPDSGLRNVEVVGVPVRESITSLDRAALRAQARAEFGFAEDARVLLVFGGSQGAQSINRAVSAAAKDLAAAGISVLHAHGPKNTLDLPPADPQAPPYVAVPYLDRMDLAYAAADLAICRSGAMTVAEVTAVGLPAIYVPLPIGNGEQRLNALPVVDAGGGLLVDDADLSGDTVARTVIPLLTDDSKLAAMTAAASLSGHPDAARRVAQVALEIARAARKKAS</sequence>
<comment type="function">
    <text evidence="1">Cell wall formation. Catalyzes the transfer of a GlcNAc subunit on undecaprenyl-pyrophosphoryl-MurNAc-pentapeptide (lipid intermediate I) to form undecaprenyl-pyrophosphoryl-MurNAc-(pentapeptide)GlcNAc (lipid intermediate II).</text>
</comment>
<comment type="catalytic activity">
    <reaction evidence="1">
        <text>di-trans,octa-cis-undecaprenyl diphospho-N-acetyl-alpha-D-muramoyl-L-alanyl-D-glutamyl-meso-2,6-diaminopimeloyl-D-alanyl-D-alanine + UDP-N-acetyl-alpha-D-glucosamine = di-trans,octa-cis-undecaprenyl diphospho-[N-acetyl-alpha-D-glucosaminyl-(1-&gt;4)]-N-acetyl-alpha-D-muramoyl-L-alanyl-D-glutamyl-meso-2,6-diaminopimeloyl-D-alanyl-D-alanine + UDP + H(+)</text>
        <dbReference type="Rhea" id="RHEA:31227"/>
        <dbReference type="ChEBI" id="CHEBI:15378"/>
        <dbReference type="ChEBI" id="CHEBI:57705"/>
        <dbReference type="ChEBI" id="CHEBI:58223"/>
        <dbReference type="ChEBI" id="CHEBI:61387"/>
        <dbReference type="ChEBI" id="CHEBI:61388"/>
        <dbReference type="EC" id="2.4.1.227"/>
    </reaction>
</comment>
<comment type="pathway">
    <text evidence="1">Cell wall biogenesis; peptidoglycan biosynthesis.</text>
</comment>
<comment type="subcellular location">
    <subcellularLocation>
        <location evidence="1">Cell membrane</location>
        <topology evidence="1">Peripheral membrane protein</topology>
        <orientation evidence="1">Cytoplasmic side</orientation>
    </subcellularLocation>
</comment>
<comment type="similarity">
    <text evidence="1">Belongs to the glycosyltransferase 28 family. MurG subfamily.</text>
</comment>
<reference key="1">
    <citation type="submission" date="2006-10" db="EMBL/GenBank/DDBJ databases">
        <authorList>
            <person name="Fleischmann R.D."/>
            <person name="Dodson R.J."/>
            <person name="Haft D.H."/>
            <person name="Merkel J.S."/>
            <person name="Nelson W.C."/>
            <person name="Fraser C.M."/>
        </authorList>
    </citation>
    <scope>NUCLEOTIDE SEQUENCE [LARGE SCALE GENOMIC DNA]</scope>
    <source>
        <strain>ATCC 700084 / mc(2)155</strain>
    </source>
</reference>
<reference key="2">
    <citation type="journal article" date="2007" name="Genome Biol.">
        <title>Interrupted coding sequences in Mycobacterium smegmatis: authentic mutations or sequencing errors?</title>
        <authorList>
            <person name="Deshayes C."/>
            <person name="Perrodou E."/>
            <person name="Gallien S."/>
            <person name="Euphrasie D."/>
            <person name="Schaeffer C."/>
            <person name="Van-Dorsselaer A."/>
            <person name="Poch O."/>
            <person name="Lecompte O."/>
            <person name="Reyrat J.-M."/>
        </authorList>
    </citation>
    <scope>NUCLEOTIDE SEQUENCE [LARGE SCALE GENOMIC DNA]</scope>
    <source>
        <strain>ATCC 700084 / mc(2)155</strain>
    </source>
</reference>
<reference key="3">
    <citation type="journal article" date="2009" name="Genome Res.">
        <title>Ortho-proteogenomics: multiple proteomes investigation through orthology and a new MS-based protocol.</title>
        <authorList>
            <person name="Gallien S."/>
            <person name="Perrodou E."/>
            <person name="Carapito C."/>
            <person name="Deshayes C."/>
            <person name="Reyrat J.-M."/>
            <person name="Van Dorsselaer A."/>
            <person name="Poch O."/>
            <person name="Schaeffer C."/>
            <person name="Lecompte O."/>
        </authorList>
    </citation>
    <scope>NUCLEOTIDE SEQUENCE [LARGE SCALE GENOMIC DNA]</scope>
    <source>
        <strain>ATCC 700084 / mc(2)155</strain>
    </source>
</reference>